<protein>
    <recommendedName>
        <fullName evidence="1">3-isopropylmalate dehydratase large subunit</fullName>
        <ecNumber evidence="1">4.2.1.33</ecNumber>
    </recommendedName>
    <alternativeName>
        <fullName evidence="1">Alpha-IPM isomerase</fullName>
        <shortName evidence="1">IPMI</shortName>
    </alternativeName>
    <alternativeName>
        <fullName evidence="1">Isopropylmalate isomerase</fullName>
    </alternativeName>
</protein>
<feature type="chain" id="PRO_1000063562" description="3-isopropylmalate dehydratase large subunit">
    <location>
        <begin position="1"/>
        <end position="468"/>
    </location>
</feature>
<feature type="binding site" evidence="1">
    <location>
        <position position="347"/>
    </location>
    <ligand>
        <name>[4Fe-4S] cluster</name>
        <dbReference type="ChEBI" id="CHEBI:49883"/>
    </ligand>
</feature>
<feature type="binding site" evidence="1">
    <location>
        <position position="408"/>
    </location>
    <ligand>
        <name>[4Fe-4S] cluster</name>
        <dbReference type="ChEBI" id="CHEBI:49883"/>
    </ligand>
</feature>
<feature type="binding site" evidence="1">
    <location>
        <position position="411"/>
    </location>
    <ligand>
        <name>[4Fe-4S] cluster</name>
        <dbReference type="ChEBI" id="CHEBI:49883"/>
    </ligand>
</feature>
<organism>
    <name type="scientific">Janthinobacterium sp. (strain Marseille)</name>
    <name type="common">Minibacterium massiliensis</name>
    <dbReference type="NCBI Taxonomy" id="375286"/>
    <lineage>
        <taxon>Bacteria</taxon>
        <taxon>Pseudomonadati</taxon>
        <taxon>Pseudomonadota</taxon>
        <taxon>Betaproteobacteria</taxon>
        <taxon>Burkholderiales</taxon>
        <taxon>Oxalobacteraceae</taxon>
        <taxon>Janthinobacterium</taxon>
    </lineage>
</organism>
<reference key="1">
    <citation type="journal article" date="2007" name="PLoS Genet.">
        <title>Genome analysis of Minibacterium massiliensis highlights the convergent evolution of water-living bacteria.</title>
        <authorList>
            <person name="Audic S."/>
            <person name="Robert C."/>
            <person name="Campagna B."/>
            <person name="Parinello H."/>
            <person name="Claverie J.-M."/>
            <person name="Raoult D."/>
            <person name="Drancourt M."/>
        </authorList>
    </citation>
    <scope>NUCLEOTIDE SEQUENCE [LARGE SCALE GENOMIC DNA]</scope>
    <source>
        <strain>Marseille</strain>
    </source>
</reference>
<keyword id="KW-0004">4Fe-4S</keyword>
<keyword id="KW-0028">Amino-acid biosynthesis</keyword>
<keyword id="KW-0100">Branched-chain amino acid biosynthesis</keyword>
<keyword id="KW-0408">Iron</keyword>
<keyword id="KW-0411">Iron-sulfur</keyword>
<keyword id="KW-0432">Leucine biosynthesis</keyword>
<keyword id="KW-0456">Lyase</keyword>
<keyword id="KW-0479">Metal-binding</keyword>
<gene>
    <name evidence="1" type="primary">leuC</name>
    <name type="ordered locus">mma_2172</name>
</gene>
<proteinExistence type="inferred from homology"/>
<comment type="function">
    <text evidence="1">Catalyzes the isomerization between 2-isopropylmalate and 3-isopropylmalate, via the formation of 2-isopropylmaleate.</text>
</comment>
<comment type="catalytic activity">
    <reaction evidence="1">
        <text>(2R,3S)-3-isopropylmalate = (2S)-2-isopropylmalate</text>
        <dbReference type="Rhea" id="RHEA:32287"/>
        <dbReference type="ChEBI" id="CHEBI:1178"/>
        <dbReference type="ChEBI" id="CHEBI:35121"/>
        <dbReference type="EC" id="4.2.1.33"/>
    </reaction>
</comment>
<comment type="cofactor">
    <cofactor evidence="1">
        <name>[4Fe-4S] cluster</name>
        <dbReference type="ChEBI" id="CHEBI:49883"/>
    </cofactor>
    <text evidence="1">Binds 1 [4Fe-4S] cluster per subunit.</text>
</comment>
<comment type="pathway">
    <text evidence="1">Amino-acid biosynthesis; L-leucine biosynthesis; L-leucine from 3-methyl-2-oxobutanoate: step 2/4.</text>
</comment>
<comment type="subunit">
    <text evidence="1">Heterodimer of LeuC and LeuD.</text>
</comment>
<comment type="similarity">
    <text evidence="1">Belongs to the aconitase/IPM isomerase family. LeuC type 1 subfamily.</text>
</comment>
<accession>A6T015</accession>
<name>LEUC_JANMA</name>
<evidence type="ECO:0000255" key="1">
    <source>
        <dbReference type="HAMAP-Rule" id="MF_01026"/>
    </source>
</evidence>
<sequence length="468" mass="50275">MAQTLYDKLWQSHVVETGDDGTTVLYIDRHLLHEVTSPQAFEGLKLAGRRPWRVSANLMVADHNVPTTDRANGIADPTSRLQVETLDGNAHEYGLTYFSMRDKRQGIVHVIGPEQGATLPGMTVVCGDSHTSTHGAFGCLAHGIGTSEVEHVLATQTLLAQKSKAMLVQVDGALPDGVTAKDIVLAVIGKIGTAGGTGYAIEFAGSTIRSLSMEGRMTICNMAIEAGARAGMVAVDDITINYVKGRPLSPVGPHWDRAVEYWRTLHSDAGAKFDLVVTLNAAEIKPQVSWGTSPEMVVAVDGRVPDPDKEKDPTKRDGMEKALIYMALKPNTPITDIRIDKVFIGSCTNSRIEDLRAAAAVVRGKYRASNVKLAMVVPGSGLVKEQAEREGLDKIFKAAGFEWREPGCSMCLAMNADRLEPGERCASTSNRNFEGRQGAGGRTHLVSPAMAAAAGIEGHFVDVRALKH</sequence>
<dbReference type="EC" id="4.2.1.33" evidence="1"/>
<dbReference type="EMBL" id="CP000269">
    <property type="protein sequence ID" value="ABR88947.1"/>
    <property type="molecule type" value="Genomic_DNA"/>
</dbReference>
<dbReference type="RefSeq" id="WP_012080025.1">
    <property type="nucleotide sequence ID" value="NC_009659.1"/>
</dbReference>
<dbReference type="SMR" id="A6T015"/>
<dbReference type="STRING" id="375286.mma_2172"/>
<dbReference type="KEGG" id="mms:mma_2172"/>
<dbReference type="eggNOG" id="COG0065">
    <property type="taxonomic scope" value="Bacteria"/>
</dbReference>
<dbReference type="HOGENOM" id="CLU_006714_3_4_4"/>
<dbReference type="OrthoDB" id="9802769at2"/>
<dbReference type="UniPathway" id="UPA00048">
    <property type="reaction ID" value="UER00071"/>
</dbReference>
<dbReference type="Proteomes" id="UP000006388">
    <property type="component" value="Chromosome"/>
</dbReference>
<dbReference type="GO" id="GO:0003861">
    <property type="term" value="F:3-isopropylmalate dehydratase activity"/>
    <property type="evidence" value="ECO:0007669"/>
    <property type="project" value="UniProtKB-UniRule"/>
</dbReference>
<dbReference type="GO" id="GO:0051539">
    <property type="term" value="F:4 iron, 4 sulfur cluster binding"/>
    <property type="evidence" value="ECO:0007669"/>
    <property type="project" value="UniProtKB-KW"/>
</dbReference>
<dbReference type="GO" id="GO:0046872">
    <property type="term" value="F:metal ion binding"/>
    <property type="evidence" value="ECO:0007669"/>
    <property type="project" value="UniProtKB-KW"/>
</dbReference>
<dbReference type="GO" id="GO:0009098">
    <property type="term" value="P:L-leucine biosynthetic process"/>
    <property type="evidence" value="ECO:0007669"/>
    <property type="project" value="UniProtKB-UniRule"/>
</dbReference>
<dbReference type="CDD" id="cd01583">
    <property type="entry name" value="IPMI"/>
    <property type="match status" value="1"/>
</dbReference>
<dbReference type="FunFam" id="3.30.499.10:FF:000007">
    <property type="entry name" value="3-isopropylmalate dehydratase large subunit"/>
    <property type="match status" value="1"/>
</dbReference>
<dbReference type="Gene3D" id="3.30.499.10">
    <property type="entry name" value="Aconitase, domain 3"/>
    <property type="match status" value="2"/>
</dbReference>
<dbReference type="HAMAP" id="MF_01026">
    <property type="entry name" value="LeuC_type1"/>
    <property type="match status" value="1"/>
</dbReference>
<dbReference type="InterPro" id="IPR004430">
    <property type="entry name" value="3-IsopropMal_deHydase_lsu"/>
</dbReference>
<dbReference type="InterPro" id="IPR015931">
    <property type="entry name" value="Acnase/IPM_dHydase_lsu_aba_1/3"/>
</dbReference>
<dbReference type="InterPro" id="IPR001030">
    <property type="entry name" value="Acoase/IPM_deHydtase_lsu_aba"/>
</dbReference>
<dbReference type="InterPro" id="IPR018136">
    <property type="entry name" value="Aconitase_4Fe-4S_BS"/>
</dbReference>
<dbReference type="InterPro" id="IPR036008">
    <property type="entry name" value="Aconitase_4Fe-4S_dom"/>
</dbReference>
<dbReference type="InterPro" id="IPR050067">
    <property type="entry name" value="IPM_dehydratase_rel_enz"/>
</dbReference>
<dbReference type="InterPro" id="IPR033941">
    <property type="entry name" value="IPMI_cat"/>
</dbReference>
<dbReference type="NCBIfam" id="TIGR00170">
    <property type="entry name" value="leuC"/>
    <property type="match status" value="1"/>
</dbReference>
<dbReference type="NCBIfam" id="NF004016">
    <property type="entry name" value="PRK05478.1"/>
    <property type="match status" value="1"/>
</dbReference>
<dbReference type="NCBIfam" id="NF009116">
    <property type="entry name" value="PRK12466.1"/>
    <property type="match status" value="1"/>
</dbReference>
<dbReference type="PANTHER" id="PTHR43822:SF9">
    <property type="entry name" value="3-ISOPROPYLMALATE DEHYDRATASE"/>
    <property type="match status" value="1"/>
</dbReference>
<dbReference type="PANTHER" id="PTHR43822">
    <property type="entry name" value="HOMOACONITASE, MITOCHONDRIAL-RELATED"/>
    <property type="match status" value="1"/>
</dbReference>
<dbReference type="Pfam" id="PF00330">
    <property type="entry name" value="Aconitase"/>
    <property type="match status" value="1"/>
</dbReference>
<dbReference type="PRINTS" id="PR00415">
    <property type="entry name" value="ACONITASE"/>
</dbReference>
<dbReference type="SUPFAM" id="SSF53732">
    <property type="entry name" value="Aconitase iron-sulfur domain"/>
    <property type="match status" value="1"/>
</dbReference>
<dbReference type="PROSITE" id="PS00450">
    <property type="entry name" value="ACONITASE_1"/>
    <property type="match status" value="1"/>
</dbReference>
<dbReference type="PROSITE" id="PS01244">
    <property type="entry name" value="ACONITASE_2"/>
    <property type="match status" value="1"/>
</dbReference>